<evidence type="ECO:0000255" key="1">
    <source>
        <dbReference type="PROSITE-ProRule" id="PRU00628"/>
    </source>
</evidence>
<evidence type="ECO:0000256" key="2">
    <source>
        <dbReference type="SAM" id="MobiDB-lite"/>
    </source>
</evidence>
<evidence type="ECO:0000269" key="3">
    <source>
    </source>
</evidence>
<evidence type="ECO:0000269" key="4">
    <source>
    </source>
</evidence>
<evidence type="ECO:0000269" key="5">
    <source>
    </source>
</evidence>
<evidence type="ECO:0000269" key="6">
    <source>
    </source>
</evidence>
<evidence type="ECO:0000305" key="7"/>
<feature type="transit peptide" description="Chloroplast" evidence="7">
    <location>
        <begin position="1"/>
        <end position="49"/>
    </location>
</feature>
<feature type="chain" id="PRO_0000021999" description="Pheophorbide a oxygenase, chloroplastic">
    <location>
        <begin position="50"/>
        <end position="537"/>
    </location>
</feature>
<feature type="domain" description="Rieske" evidence="1">
    <location>
        <begin position="88"/>
        <end position="200"/>
    </location>
</feature>
<feature type="region of interest" description="Disordered" evidence="2">
    <location>
        <begin position="51"/>
        <end position="77"/>
    </location>
</feature>
<feature type="compositionally biased region" description="Basic and acidic residues" evidence="2">
    <location>
        <begin position="62"/>
        <end position="77"/>
    </location>
</feature>
<feature type="binding site" evidence="1">
    <location>
        <position position="130"/>
    </location>
    <ligand>
        <name>[2Fe-2S] cluster</name>
        <dbReference type="ChEBI" id="CHEBI:190135"/>
    </ligand>
</feature>
<feature type="binding site" evidence="1">
    <location>
        <position position="132"/>
    </location>
    <ligand>
        <name>[2Fe-2S] cluster</name>
        <dbReference type="ChEBI" id="CHEBI:190135"/>
    </ligand>
</feature>
<feature type="binding site" evidence="1">
    <location>
        <position position="150"/>
    </location>
    <ligand>
        <name>[2Fe-2S] cluster</name>
        <dbReference type="ChEBI" id="CHEBI:190135"/>
    </ligand>
</feature>
<feature type="binding site" evidence="1">
    <location>
        <position position="153"/>
    </location>
    <ligand>
        <name>[2Fe-2S] cluster</name>
        <dbReference type="ChEBI" id="CHEBI:190135"/>
    </ligand>
</feature>
<feature type="sequence conflict" description="In Ref. 1; AAC49679 and 3; AAR05797." evidence="7" ref="1 3">
    <original>D</original>
    <variation>V</variation>
    <location>
        <position position="98"/>
    </location>
</feature>
<keyword id="KW-0001">2Fe-2S</keyword>
<keyword id="KW-0881">Chlorophyll catabolism</keyword>
<keyword id="KW-0150">Chloroplast</keyword>
<keyword id="KW-0408">Iron</keyword>
<keyword id="KW-0411">Iron-sulfur</keyword>
<keyword id="KW-0472">Membrane</keyword>
<keyword id="KW-0479">Metal-binding</keyword>
<keyword id="KW-0560">Oxidoreductase</keyword>
<keyword id="KW-0934">Plastid</keyword>
<keyword id="KW-1185">Reference proteome</keyword>
<keyword id="KW-0793">Thylakoid</keyword>
<keyword id="KW-0809">Transit peptide</keyword>
<organism>
    <name type="scientific">Arabidopsis thaliana</name>
    <name type="common">Mouse-ear cress</name>
    <dbReference type="NCBI Taxonomy" id="3702"/>
    <lineage>
        <taxon>Eukaryota</taxon>
        <taxon>Viridiplantae</taxon>
        <taxon>Streptophyta</taxon>
        <taxon>Embryophyta</taxon>
        <taxon>Tracheophyta</taxon>
        <taxon>Spermatophyta</taxon>
        <taxon>Magnoliopsida</taxon>
        <taxon>eudicotyledons</taxon>
        <taxon>Gunneridae</taxon>
        <taxon>Pentapetalae</taxon>
        <taxon>rosids</taxon>
        <taxon>malvids</taxon>
        <taxon>Brassicales</taxon>
        <taxon>Brassicaceae</taxon>
        <taxon>Camelineae</taxon>
        <taxon>Arabidopsis</taxon>
    </lineage>
</organism>
<protein>
    <recommendedName>
        <fullName>Pheophorbide a oxygenase, chloroplastic</fullName>
        <shortName>AtPaO</shortName>
        <shortName>Pheide a oxygenase</shortName>
        <ecNumber evidence="3">1.14.15.17</ecNumber>
    </recommendedName>
    <alternativeName>
        <fullName>Accelerated cell death 1</fullName>
    </alternativeName>
    <alternativeName>
        <fullName>Lethal leaf-spot 1 homolog</fullName>
        <shortName>Lls1</shortName>
    </alternativeName>
</protein>
<sequence length="537" mass="60756">MSVVLLSSTSATITKSQSKKIPFLSPTTKFPLKVSISPSRSKLFHNPLRVAAPPSVPTSDSTEEKRIEEEYGGDKEEEGSEFKWRDHWYPVSLVEDLDPNVPTPFQLLGRDLVLWFDRNDQKWAAFDDLCPHRLAPLSEGRLDENGHLQCSYHGWSFGGCGSCTRIPQAATSGPEARAVKSPRACAIKFPTMVSQGLLFVWPDENGWDRANSIEPPRLPDDFDKPEFSTVTIQRDLFYGYDTLMENVSDPSHIDFAHHKVTGRRDRAKPLPFKVESSGPWGFQGANDDSPRITAKFVAPCYSMNKIELDAKLPIVGNQKWVIWICSFNIPMAPGKTRSIVCSARNFFQFSVPGPAWWQVVPRWYEHWTSNLVYDGDMIVLQGQEKVFLAKSMESPDYDVNKQYTKLTFTPTQADRFVLAFRNWLRRHGKSQPEWFGSTPSNQPLPSTVLTKRQMLDRFDQHTQVCSSCKGAYNSFQILKKFLVGATVFWAATAGVPSDVQIRLVLAGLSLISAASAYALHEQEKNFVFRDYVHSEIE</sequence>
<name>PAO_ARATH</name>
<gene>
    <name type="primary">PAO</name>
    <name type="synonym">ACD1</name>
    <name type="ordered locus">At3g44880</name>
    <name type="ORF">F28D10_70</name>
</gene>
<reference key="1">
    <citation type="journal article" date="1997" name="Cell">
        <title>A novel suppressor of cell death in plants encoded by the Lls1 gene of maize.</title>
        <authorList>
            <person name="Gray J."/>
            <person name="Close P.S."/>
            <person name="Briggs S.P."/>
            <person name="Johal G.S."/>
        </authorList>
    </citation>
    <scope>NUCLEOTIDE SEQUENCE [MRNA]</scope>
    <source>
        <strain>cv. Columbia</strain>
    </source>
</reference>
<reference key="2">
    <citation type="journal article" date="2002" name="Plant Physiol.">
        <title>Light-dependent death of maize lls1 cells is mediated by mature chloroplasts.</title>
        <authorList>
            <person name="Gray J."/>
            <person name="Janick-Buckner D."/>
            <person name="Buckner B."/>
            <person name="Close P.S."/>
            <person name="Johal G.S."/>
        </authorList>
    </citation>
    <scope>NUCLEOTIDE SEQUENCE [MRNA]</scope>
</reference>
<reference key="3">
    <citation type="journal article" date="2004" name="Plant Mol. Biol.">
        <title>The wound-inducible Lls1 gene from maize is an orthologue of the Arabidopsis Acd1 gene, and the LLS1 protein is present in non-photosynthetic tissues.</title>
        <authorList>
            <person name="Yang M."/>
            <person name="Wardzala E."/>
            <person name="Johal G.S."/>
            <person name="Gray J."/>
        </authorList>
    </citation>
    <scope>NUCLEOTIDE SEQUENCE [MRNA]</scope>
    <source>
        <strain>cv. Columbia</strain>
    </source>
</reference>
<reference key="4">
    <citation type="journal article" date="2000" name="Nature">
        <title>Sequence and analysis of chromosome 3 of the plant Arabidopsis thaliana.</title>
        <authorList>
            <person name="Salanoubat M."/>
            <person name="Lemcke K."/>
            <person name="Rieger M."/>
            <person name="Ansorge W."/>
            <person name="Unseld M."/>
            <person name="Fartmann B."/>
            <person name="Valle G."/>
            <person name="Bloecker H."/>
            <person name="Perez-Alonso M."/>
            <person name="Obermaier B."/>
            <person name="Delseny M."/>
            <person name="Boutry M."/>
            <person name="Grivell L.A."/>
            <person name="Mache R."/>
            <person name="Puigdomenech P."/>
            <person name="De Simone V."/>
            <person name="Choisne N."/>
            <person name="Artiguenave F."/>
            <person name="Robert C."/>
            <person name="Brottier P."/>
            <person name="Wincker P."/>
            <person name="Cattolico L."/>
            <person name="Weissenbach J."/>
            <person name="Saurin W."/>
            <person name="Quetier F."/>
            <person name="Schaefer M."/>
            <person name="Mueller-Auer S."/>
            <person name="Gabel C."/>
            <person name="Fuchs M."/>
            <person name="Benes V."/>
            <person name="Wurmbach E."/>
            <person name="Drzonek H."/>
            <person name="Erfle H."/>
            <person name="Jordan N."/>
            <person name="Bangert S."/>
            <person name="Wiedelmann R."/>
            <person name="Kranz H."/>
            <person name="Voss H."/>
            <person name="Holland R."/>
            <person name="Brandt P."/>
            <person name="Nyakatura G."/>
            <person name="Vezzi A."/>
            <person name="D'Angelo M."/>
            <person name="Pallavicini A."/>
            <person name="Toppo S."/>
            <person name="Simionati B."/>
            <person name="Conrad A."/>
            <person name="Hornischer K."/>
            <person name="Kauer G."/>
            <person name="Loehnert T.-H."/>
            <person name="Nordsiek G."/>
            <person name="Reichelt J."/>
            <person name="Scharfe M."/>
            <person name="Schoen O."/>
            <person name="Bargues M."/>
            <person name="Terol J."/>
            <person name="Climent J."/>
            <person name="Navarro P."/>
            <person name="Collado C."/>
            <person name="Perez-Perez A."/>
            <person name="Ottenwaelder B."/>
            <person name="Duchemin D."/>
            <person name="Cooke R."/>
            <person name="Laudie M."/>
            <person name="Berger-Llauro C."/>
            <person name="Purnelle B."/>
            <person name="Masuy D."/>
            <person name="de Haan M."/>
            <person name="Maarse A.C."/>
            <person name="Alcaraz J.-P."/>
            <person name="Cottet A."/>
            <person name="Casacuberta E."/>
            <person name="Monfort A."/>
            <person name="Argiriou A."/>
            <person name="Flores M."/>
            <person name="Liguori R."/>
            <person name="Vitale D."/>
            <person name="Mannhaupt G."/>
            <person name="Haase D."/>
            <person name="Schoof H."/>
            <person name="Rudd S."/>
            <person name="Zaccaria P."/>
            <person name="Mewes H.-W."/>
            <person name="Mayer K.F.X."/>
            <person name="Kaul S."/>
            <person name="Town C.D."/>
            <person name="Koo H.L."/>
            <person name="Tallon L.J."/>
            <person name="Jenkins J."/>
            <person name="Rooney T."/>
            <person name="Rizzo M."/>
            <person name="Walts A."/>
            <person name="Utterback T."/>
            <person name="Fujii C.Y."/>
            <person name="Shea T.P."/>
            <person name="Creasy T.H."/>
            <person name="Haas B."/>
            <person name="Maiti R."/>
            <person name="Wu D."/>
            <person name="Peterson J."/>
            <person name="Van Aken S."/>
            <person name="Pai G."/>
            <person name="Militscher J."/>
            <person name="Sellers P."/>
            <person name="Gill J.E."/>
            <person name="Feldblyum T.V."/>
            <person name="Preuss D."/>
            <person name="Lin X."/>
            <person name="Nierman W.C."/>
            <person name="Salzberg S.L."/>
            <person name="White O."/>
            <person name="Venter J.C."/>
            <person name="Fraser C.M."/>
            <person name="Kaneko T."/>
            <person name="Nakamura Y."/>
            <person name="Sato S."/>
            <person name="Kato T."/>
            <person name="Asamizu E."/>
            <person name="Sasamoto S."/>
            <person name="Kimura T."/>
            <person name="Idesawa K."/>
            <person name="Kawashima K."/>
            <person name="Kishida Y."/>
            <person name="Kiyokawa C."/>
            <person name="Kohara M."/>
            <person name="Matsumoto M."/>
            <person name="Matsuno A."/>
            <person name="Muraki A."/>
            <person name="Nakayama S."/>
            <person name="Nakazaki N."/>
            <person name="Shinpo S."/>
            <person name="Takeuchi C."/>
            <person name="Wada T."/>
            <person name="Watanabe A."/>
            <person name="Yamada M."/>
            <person name="Yasuda M."/>
            <person name="Tabata S."/>
        </authorList>
    </citation>
    <scope>NUCLEOTIDE SEQUENCE [LARGE SCALE GENOMIC DNA]</scope>
    <source>
        <strain>cv. Columbia</strain>
    </source>
</reference>
<reference key="5">
    <citation type="journal article" date="2017" name="Plant J.">
        <title>Araport11: a complete reannotation of the Arabidopsis thaliana reference genome.</title>
        <authorList>
            <person name="Cheng C.Y."/>
            <person name="Krishnakumar V."/>
            <person name="Chan A.P."/>
            <person name="Thibaud-Nissen F."/>
            <person name="Schobel S."/>
            <person name="Town C.D."/>
        </authorList>
    </citation>
    <scope>GENOME REANNOTATION</scope>
    <source>
        <strain>cv. Columbia</strain>
    </source>
</reference>
<reference key="6">
    <citation type="journal article" date="2003" name="Science">
        <title>Empirical analysis of transcriptional activity in the Arabidopsis genome.</title>
        <authorList>
            <person name="Yamada K."/>
            <person name="Lim J."/>
            <person name="Dale J.M."/>
            <person name="Chen H."/>
            <person name="Shinn P."/>
            <person name="Palm C.J."/>
            <person name="Southwick A.M."/>
            <person name="Wu H.C."/>
            <person name="Kim C.J."/>
            <person name="Nguyen M."/>
            <person name="Pham P.K."/>
            <person name="Cheuk R.F."/>
            <person name="Karlin-Newmann G."/>
            <person name="Liu S.X."/>
            <person name="Lam B."/>
            <person name="Sakano H."/>
            <person name="Wu T."/>
            <person name="Yu G."/>
            <person name="Miranda M."/>
            <person name="Quach H.L."/>
            <person name="Tripp M."/>
            <person name="Chang C.H."/>
            <person name="Lee J.M."/>
            <person name="Toriumi M.J."/>
            <person name="Chan M.M."/>
            <person name="Tang C.C."/>
            <person name="Onodera C.S."/>
            <person name="Deng J.M."/>
            <person name="Akiyama K."/>
            <person name="Ansari Y."/>
            <person name="Arakawa T."/>
            <person name="Banh J."/>
            <person name="Banno F."/>
            <person name="Bowser L."/>
            <person name="Brooks S.Y."/>
            <person name="Carninci P."/>
            <person name="Chao Q."/>
            <person name="Choy N."/>
            <person name="Enju A."/>
            <person name="Goldsmith A.D."/>
            <person name="Gurjal M."/>
            <person name="Hansen N.F."/>
            <person name="Hayashizaki Y."/>
            <person name="Johnson-Hopson C."/>
            <person name="Hsuan V.W."/>
            <person name="Iida K."/>
            <person name="Karnes M."/>
            <person name="Khan S."/>
            <person name="Koesema E."/>
            <person name="Ishida J."/>
            <person name="Jiang P.X."/>
            <person name="Jones T."/>
            <person name="Kawai J."/>
            <person name="Kamiya A."/>
            <person name="Meyers C."/>
            <person name="Nakajima M."/>
            <person name="Narusaka M."/>
            <person name="Seki M."/>
            <person name="Sakurai T."/>
            <person name="Satou M."/>
            <person name="Tamse R."/>
            <person name="Vaysberg M."/>
            <person name="Wallender E.K."/>
            <person name="Wong C."/>
            <person name="Yamamura Y."/>
            <person name="Yuan S."/>
            <person name="Shinozaki K."/>
            <person name="Davis R.W."/>
            <person name="Theologis A."/>
            <person name="Ecker J.R."/>
        </authorList>
    </citation>
    <scope>NUCLEOTIDE SEQUENCE [LARGE SCALE MRNA]</scope>
    <source>
        <strain>cv. Columbia</strain>
    </source>
</reference>
<reference key="7">
    <citation type="journal article" date="2003" name="Proc. Natl. Acad. Sci. U.S.A.">
        <title>Chlorophyll breakdown: pheophorbide a oxygenase is a Rieske-type iron-sulfur protein, encoded by the accelerated cell death 1 gene.</title>
        <authorList>
            <person name="Pruzinska A."/>
            <person name="Tanner G."/>
            <person name="Anders I."/>
            <person name="Roca M."/>
            <person name="Hortensteiner S."/>
        </authorList>
    </citation>
    <scope>FUNCTION</scope>
    <scope>CATALYTIC ACTIVITY</scope>
    <scope>BIOPHYSICOCHEMICAL PROPERTIES</scope>
    <scope>CHARACTERIZATION</scope>
</reference>
<reference key="8">
    <citation type="journal article" date="2003" name="Plant Cell Physiol.">
        <title>The Arabidopsis-accelerated cell death gene ACD1 is involved in oxygenation of pheophorbide a: inhibition of the pheophorbide a oxygenase activity does not lead to the 'Stay-Green' phenotype in Arabidopsis.</title>
        <authorList>
            <person name="Tanaka R."/>
            <person name="Hirashima M."/>
            <person name="Satoh S."/>
            <person name="Tanaka A."/>
        </authorList>
    </citation>
    <scope>FUNCTION</scope>
</reference>
<reference key="9">
    <citation type="journal article" date="2012" name="Plant Cell">
        <title>STAY-GREEN and chlorophyll catabolic enzymes interact at light-harvesting complex II for chlorophyll detoxification during leaf senescence in Arabidopsis.</title>
        <authorList>
            <person name="Sakuraba Y."/>
            <person name="Schelbert S."/>
            <person name="Park S.Y."/>
            <person name="Han S.H."/>
            <person name="Lee B.D."/>
            <person name="Andres C.B."/>
            <person name="Kessler F."/>
            <person name="Hortensteiner S."/>
            <person name="Paek N.C."/>
        </authorList>
    </citation>
    <scope>SUBCELLULAR LOCATION</scope>
    <scope>INTERACTION WITH SGR1; RCCR; PPH AND LHCII COMPLEX</scope>
</reference>
<reference key="10">
    <citation type="journal article" date="2013" name="Biochem. Biophys. Res. Commun.">
        <title>7-Hydroxymethyl chlorophyll a reductase functions in metabolic channeling of chlorophyll breakdown intermediates during leaf senescence.</title>
        <authorList>
            <person name="Sakuraba Y."/>
            <person name="Kim Y.S."/>
            <person name="Yoo S.C."/>
            <person name="Hortensteiner S."/>
            <person name="Paek N.C."/>
        </authorList>
    </citation>
    <scope>INTERACTION WITH HCAR</scope>
    <scope>DEVELOPMENTAL STAGE</scope>
</reference>
<dbReference type="EC" id="1.14.15.17" evidence="3"/>
<dbReference type="EMBL" id="U77347">
    <property type="protein sequence ID" value="AAC49679.1"/>
    <property type="status" value="ALT_FRAME"/>
    <property type="molecule type" value="mRNA"/>
</dbReference>
<dbReference type="EMBL" id="AY344061">
    <property type="protein sequence ID" value="AAR05797.1"/>
    <property type="molecule type" value="mRNA"/>
</dbReference>
<dbReference type="EMBL" id="AL391254">
    <property type="protein sequence ID" value="CAC03538.1"/>
    <property type="molecule type" value="Genomic_DNA"/>
</dbReference>
<dbReference type="EMBL" id="CP002686">
    <property type="protein sequence ID" value="AEE77964.1"/>
    <property type="molecule type" value="Genomic_DNA"/>
</dbReference>
<dbReference type="EMBL" id="AY093092">
    <property type="protein sequence ID" value="AAM13091.1"/>
    <property type="molecule type" value="mRNA"/>
</dbReference>
<dbReference type="PIR" id="T51785">
    <property type="entry name" value="T51785"/>
</dbReference>
<dbReference type="RefSeq" id="NP_190074.1">
    <property type="nucleotide sequence ID" value="NM_114357.6"/>
</dbReference>
<dbReference type="SMR" id="Q9FYC2"/>
<dbReference type="BioGRID" id="8942">
    <property type="interactions" value="6"/>
</dbReference>
<dbReference type="FunCoup" id="Q9FYC2">
    <property type="interactions" value="85"/>
</dbReference>
<dbReference type="IntAct" id="Q9FYC2">
    <property type="interactions" value="2"/>
</dbReference>
<dbReference type="MINT" id="Q9FYC2"/>
<dbReference type="STRING" id="3702.Q9FYC2"/>
<dbReference type="GlyGen" id="Q9FYC2">
    <property type="glycosylation" value="1 site"/>
</dbReference>
<dbReference type="SwissPalm" id="Q9FYC2"/>
<dbReference type="PaxDb" id="3702-AT3G44880.1"/>
<dbReference type="ProteomicsDB" id="236837"/>
<dbReference type="EnsemblPlants" id="AT3G44880.1">
    <property type="protein sequence ID" value="AT3G44880.1"/>
    <property type="gene ID" value="AT3G44880"/>
</dbReference>
<dbReference type="GeneID" id="823622"/>
<dbReference type="Gramene" id="AT3G44880.1">
    <property type="protein sequence ID" value="AT3G44880.1"/>
    <property type="gene ID" value="AT3G44880"/>
</dbReference>
<dbReference type="KEGG" id="ath:AT3G44880"/>
<dbReference type="Araport" id="AT3G44880"/>
<dbReference type="TAIR" id="AT3G44880">
    <property type="gene designation" value="ACD1"/>
</dbReference>
<dbReference type="eggNOG" id="ENOG502QQ8U">
    <property type="taxonomic scope" value="Eukaryota"/>
</dbReference>
<dbReference type="HOGENOM" id="CLU_003927_1_0_1"/>
<dbReference type="InParanoid" id="Q9FYC2"/>
<dbReference type="OMA" id="MWHDLTS"/>
<dbReference type="OrthoDB" id="426882at2759"/>
<dbReference type="PhylomeDB" id="Q9FYC2"/>
<dbReference type="BioCyc" id="ARA:AT3G44880-MONOMER"/>
<dbReference type="BioCyc" id="MetaCyc:AT3G44880-MONOMER"/>
<dbReference type="BRENDA" id="1.14.15.17">
    <property type="organism ID" value="399"/>
</dbReference>
<dbReference type="UniPathway" id="UPA00674"/>
<dbReference type="PRO" id="PR:Q9FYC2"/>
<dbReference type="Proteomes" id="UP000006548">
    <property type="component" value="Chromosome 3"/>
</dbReference>
<dbReference type="ExpressionAtlas" id="Q9FYC2">
    <property type="expression patterns" value="baseline and differential"/>
</dbReference>
<dbReference type="GO" id="GO:0009507">
    <property type="term" value="C:chloroplast"/>
    <property type="evidence" value="ECO:0007005"/>
    <property type="project" value="TAIR"/>
</dbReference>
<dbReference type="GO" id="GO:0009941">
    <property type="term" value="C:chloroplast envelope"/>
    <property type="evidence" value="ECO:0007005"/>
    <property type="project" value="TAIR"/>
</dbReference>
<dbReference type="GO" id="GO:0009706">
    <property type="term" value="C:chloroplast inner membrane"/>
    <property type="evidence" value="ECO:0000304"/>
    <property type="project" value="TAIR"/>
</dbReference>
<dbReference type="GO" id="GO:0009534">
    <property type="term" value="C:chloroplast thylakoid"/>
    <property type="evidence" value="ECO:0007005"/>
    <property type="project" value="TAIR"/>
</dbReference>
<dbReference type="GO" id="GO:0009535">
    <property type="term" value="C:chloroplast thylakoid membrane"/>
    <property type="evidence" value="ECO:0007669"/>
    <property type="project" value="UniProtKB-SubCell"/>
</dbReference>
<dbReference type="GO" id="GO:0005829">
    <property type="term" value="C:cytosol"/>
    <property type="evidence" value="ECO:0007005"/>
    <property type="project" value="TAIR"/>
</dbReference>
<dbReference type="GO" id="GO:0051537">
    <property type="term" value="F:2 iron, 2 sulfur cluster binding"/>
    <property type="evidence" value="ECO:0007669"/>
    <property type="project" value="UniProtKB-KW"/>
</dbReference>
<dbReference type="GO" id="GO:0010277">
    <property type="term" value="F:chlorophyllide a oxygenase activity"/>
    <property type="evidence" value="ECO:0007669"/>
    <property type="project" value="InterPro"/>
</dbReference>
<dbReference type="GO" id="GO:0051536">
    <property type="term" value="F:iron-sulfur cluster binding"/>
    <property type="evidence" value="ECO:0000250"/>
    <property type="project" value="TAIR"/>
</dbReference>
<dbReference type="GO" id="GO:0046872">
    <property type="term" value="F:metal ion binding"/>
    <property type="evidence" value="ECO:0007669"/>
    <property type="project" value="UniProtKB-KW"/>
</dbReference>
<dbReference type="GO" id="GO:0032441">
    <property type="term" value="F:pheophorbide a oxygenase activity"/>
    <property type="evidence" value="ECO:0000314"/>
    <property type="project" value="TAIR"/>
</dbReference>
<dbReference type="GO" id="GO:0008219">
    <property type="term" value="P:cell death"/>
    <property type="evidence" value="ECO:0000315"/>
    <property type="project" value="TAIR"/>
</dbReference>
<dbReference type="GO" id="GO:0015996">
    <property type="term" value="P:chlorophyll catabolic process"/>
    <property type="evidence" value="ECO:0000315"/>
    <property type="project" value="TAIR"/>
</dbReference>
<dbReference type="GO" id="GO:0042742">
    <property type="term" value="P:defense response to bacterium"/>
    <property type="evidence" value="ECO:0000315"/>
    <property type="project" value="TAIR"/>
</dbReference>
<dbReference type="GO" id="GO:0009908">
    <property type="term" value="P:flower development"/>
    <property type="evidence" value="ECO:0000315"/>
    <property type="project" value="TAIR"/>
</dbReference>
<dbReference type="GO" id="GO:0010154">
    <property type="term" value="P:fruit development"/>
    <property type="evidence" value="ECO:0000315"/>
    <property type="project" value="TAIR"/>
</dbReference>
<dbReference type="CDD" id="cd03480">
    <property type="entry name" value="Rieske_RO_Alpha_PaO"/>
    <property type="match status" value="1"/>
</dbReference>
<dbReference type="Gene3D" id="3.90.380.10">
    <property type="entry name" value="Naphthalene 1,2-dioxygenase Alpha Subunit, Chain A, domain 1"/>
    <property type="match status" value="1"/>
</dbReference>
<dbReference type="Gene3D" id="2.102.10.10">
    <property type="entry name" value="Rieske [2Fe-2S] iron-sulphur domain"/>
    <property type="match status" value="1"/>
</dbReference>
<dbReference type="InterPro" id="IPR050584">
    <property type="entry name" value="Cholesterol_7-desaturase"/>
</dbReference>
<dbReference type="InterPro" id="IPR013626">
    <property type="entry name" value="PaO"/>
</dbReference>
<dbReference type="InterPro" id="IPR017941">
    <property type="entry name" value="Rieske_2Fe-2S"/>
</dbReference>
<dbReference type="InterPro" id="IPR036922">
    <property type="entry name" value="Rieske_2Fe-2S_sf"/>
</dbReference>
<dbReference type="PANTHER" id="PTHR21266">
    <property type="entry name" value="IRON-SULFUR DOMAIN CONTAINING PROTEIN"/>
    <property type="match status" value="1"/>
</dbReference>
<dbReference type="PANTHER" id="PTHR21266:SF24">
    <property type="entry name" value="PHEOPHORBIDE A OXYGENASE, CHLOROPLASTIC"/>
    <property type="match status" value="1"/>
</dbReference>
<dbReference type="Pfam" id="PF08417">
    <property type="entry name" value="PaO"/>
    <property type="match status" value="1"/>
</dbReference>
<dbReference type="Pfam" id="PF00355">
    <property type="entry name" value="Rieske"/>
    <property type="match status" value="1"/>
</dbReference>
<dbReference type="SUPFAM" id="SSF55961">
    <property type="entry name" value="Bet v1-like"/>
    <property type="match status" value="1"/>
</dbReference>
<dbReference type="SUPFAM" id="SSF50022">
    <property type="entry name" value="ISP domain"/>
    <property type="match status" value="1"/>
</dbReference>
<dbReference type="PROSITE" id="PS51296">
    <property type="entry name" value="RIESKE"/>
    <property type="match status" value="1"/>
</dbReference>
<comment type="function">
    <text evidence="3 4">Catalyzes the key reaction of chlorophyll catabolism, porphyrin macrocycle cleavage of pheophorbide a (pheide a) to a primary fluorescent catabolite (pFCC). Works in a two-step reaction with red chlorophyll catabolite reductase (RCCR). Creates the intermediate RCC through the opening of the porphyrin macrocycle by the introduction of one atom of molecular oxygen at the alpha-methine bridge. Seems to be specific for pheide a. Belongs to the chlorophyll catabolic enzymes (CCEs).</text>
</comment>
<comment type="catalytic activity">
    <reaction evidence="3">
        <text>pheophorbide a + 2 reduced [2Fe-2S]-[ferredoxin] + O2 + 2 H(+) = red chlorophyll catabolite + 2 oxidized [2Fe-2S]-[ferredoxin]</text>
        <dbReference type="Rhea" id="RHEA:48140"/>
        <dbReference type="Rhea" id="RHEA-COMP:10000"/>
        <dbReference type="Rhea" id="RHEA-COMP:10001"/>
        <dbReference type="ChEBI" id="CHEBI:15378"/>
        <dbReference type="ChEBI" id="CHEBI:15379"/>
        <dbReference type="ChEBI" id="CHEBI:33737"/>
        <dbReference type="ChEBI" id="CHEBI:33738"/>
        <dbReference type="ChEBI" id="CHEBI:58687"/>
        <dbReference type="ChEBI" id="CHEBI:58716"/>
        <dbReference type="EC" id="1.14.15.17"/>
    </reaction>
</comment>
<comment type="activity regulation">
    <text>Might be regulated by a phosphorylation/dephosphorylation mechanism.</text>
</comment>
<comment type="biophysicochemical properties">
    <kinetics>
        <KM evidence="3">6 mM for pheophorbide a</KM>
    </kinetics>
</comment>
<comment type="pathway">
    <text>Porphyrin-containing compound metabolism; chlorophyll degradation.</text>
</comment>
<comment type="subunit">
    <text evidence="5 6">Interacts with HCAR, SGR1, RCCR, PPH and the LHCII complex. Part of a SGR1-CCE-LHCII complex, which acts in chlorophyll breakdown.</text>
</comment>
<comment type="subcellular location">
    <subcellularLocation>
        <location evidence="5">Plastid</location>
        <location evidence="5">Chloroplast thylakoid membrane</location>
    </subcellularLocation>
</comment>
<comment type="developmental stage">
    <text evidence="6">Up-regulated during senescence.</text>
</comment>
<comment type="sequence caution" evidence="7">
    <conflict type="frameshift">
        <sequence resource="EMBL-CDS" id="AAC49679"/>
    </conflict>
</comment>
<proteinExistence type="evidence at protein level"/>
<accession>Q9FYC2</accession>
<accession>O04422</accession>